<evidence type="ECO:0000250" key="1">
    <source>
        <dbReference type="UniProtKB" id="A0A452E9Y6"/>
    </source>
</evidence>
<evidence type="ECO:0000250" key="2">
    <source>
        <dbReference type="UniProtKB" id="P05164"/>
    </source>
</evidence>
<evidence type="ECO:0000250" key="3">
    <source>
        <dbReference type="UniProtKB" id="P11678"/>
    </source>
</evidence>
<evidence type="ECO:0000250" key="4">
    <source>
        <dbReference type="UniProtKB" id="P22079"/>
    </source>
</evidence>
<evidence type="ECO:0000250" key="5">
    <source>
        <dbReference type="UniProtKB" id="P80025"/>
    </source>
</evidence>
<evidence type="ECO:0000250" key="6">
    <source>
        <dbReference type="UniProtKB" id="Q5SW46"/>
    </source>
</evidence>
<evidence type="ECO:0000255" key="7"/>
<evidence type="ECO:0000255" key="8">
    <source>
        <dbReference type="PROSITE-ProRule" id="PRU00298"/>
    </source>
</evidence>
<evidence type="ECO:0000269" key="9">
    <source>
    </source>
</evidence>
<evidence type="ECO:0000269" key="10">
    <source>
    </source>
</evidence>
<evidence type="ECO:0000269" key="11">
    <source>
    </source>
</evidence>
<evidence type="ECO:0000269" key="12">
    <source ref="5"/>
</evidence>
<evidence type="ECO:0000269" key="13">
    <source ref="6"/>
</evidence>
<evidence type="ECO:0000303" key="14">
    <source>
    </source>
</evidence>
<evidence type="ECO:0000303" key="15">
    <source>
    </source>
</evidence>
<evidence type="ECO:0000305" key="16"/>
<evidence type="ECO:0000305" key="17">
    <source>
    </source>
</evidence>
<evidence type="ECO:0000305" key="18">
    <source>
    </source>
</evidence>
<evidence type="ECO:0000312" key="19">
    <source>
        <dbReference type="EMBL" id="ABQ45486.1"/>
    </source>
</evidence>
<evidence type="ECO:0000312" key="20">
    <source>
        <dbReference type="EMBL" id="ADZ95997.1"/>
    </source>
</evidence>
<evidence type="ECO:0000312" key="21">
    <source>
        <dbReference type="PDB" id="2GJM"/>
    </source>
</evidence>
<evidence type="ECO:0000312" key="22">
    <source>
        <dbReference type="PDB" id="3ERH"/>
    </source>
</evidence>
<evidence type="ECO:0007829" key="23">
    <source>
        <dbReference type="PDB" id="2GJM"/>
    </source>
</evidence>
<evidence type="ECO:0007829" key="24">
    <source>
        <dbReference type="PDB" id="3ERH"/>
    </source>
</evidence>
<evidence type="ECO:0007829" key="25">
    <source>
        <dbReference type="PDB" id="3FAQ"/>
    </source>
</evidence>
<evidence type="ECO:0007829" key="26">
    <source>
        <dbReference type="PDB" id="3FNL"/>
    </source>
</evidence>
<evidence type="ECO:0007829" key="27">
    <source>
        <dbReference type="PDB" id="4Y55"/>
    </source>
</evidence>
<accession>A5JUY8</accession>
<accession>F2X043</accession>
<gene>
    <name evidence="20" type="primary">LPO</name>
</gene>
<reference evidence="16 19 21" key="1">
    <citation type="submission" date="2007-04" db="EMBL/GenBank/DDBJ databases">
        <authorList>
            <person name="Kushwaha G.S."/>
            <person name="Baskar Singh S."/>
            <person name="Sheikh I.A."/>
            <person name="Ethayathulla A.S."/>
            <person name="Sharma S."/>
            <person name="Srinivasan A."/>
            <person name="Singh T.P."/>
        </authorList>
    </citation>
    <scope>NUCLEOTIDE SEQUENCE [MRNA]</scope>
    <source>
        <tissue evidence="19">Mammary gland</tissue>
    </source>
</reference>
<reference evidence="16 19 21" key="2">
    <citation type="submission" date="2010-09" db="EMBL/GenBank/DDBJ databases">
        <title>Cloning and sequencing of Bubalus bubalis lactoperoxidase gene.</title>
        <authorList>
            <person name="Pradeep M.A."/>
            <person name="Kaushik J.K."/>
            <person name="Mohanty A.K."/>
        </authorList>
    </citation>
    <scope>NUCLEOTIDE SEQUENCE [MRNA]</scope>
</reference>
<reference evidence="16" key="3">
    <citation type="journal article" date="2002" name="Prep. Biochem. Biotechnol.">
        <title>Purification of lactoperoxidase from creek-water buffalo milk and investigation of kinetic and antibacterial properties.</title>
        <authorList>
            <person name="Ozdemir H."/>
            <person name="Hacibeyoglu H.I."/>
            <person name="Uslu H."/>
        </authorList>
    </citation>
    <scope>FUNCTION</scope>
    <scope>CATALYTIC ACTIVITY</scope>
    <scope>BIOPHYSICOCHEMICAL PROPERTIES</scope>
    <scope>SUBCELLULAR LOCATION</scope>
    <scope>TISSUE SPECIFICITY</scope>
</reference>
<reference key="4">
    <citation type="journal article" date="2018" name="J. Agric. Food Chem.">
        <title>Comparative Site-Specific N-Glycosylation Analysis of Lactoperoxidase from Buffalo and Goat Milk Using RP-UHPLC-MS/MS Reveals a Distinct Glycan Pattern.</title>
        <authorList>
            <person name="B S G.K."/>
            <person name="Mohan Reddy P."/>
            <person name="Kottekad S."/>
        </authorList>
    </citation>
    <scope>SUBCELLULAR LOCATION</scope>
    <scope>TISSUE SPECIFICITY</scope>
    <scope>IDENTIFICATION BY MASS SPECTROMETRY</scope>
    <scope>GLYCOSYLATION AT ASN-106; ASN-212; ASN-322 AND ASN-449</scope>
</reference>
<reference evidence="16 19 21" key="5">
    <citation type="submission" date="2006-03" db="PDB data bank">
        <title>Crystal structure of Buffalo lactoperoxidase at 2.75A resolution.</title>
        <authorList>
            <person name="Sheikh I.A."/>
            <person name="Ethayathulla A.S."/>
            <person name="Singh A.K."/>
            <person name="Singh N."/>
            <person name="Sharma S."/>
            <person name="Singh T.P."/>
        </authorList>
    </citation>
    <scope>X-RAY CRYSTALLOGRAPHY (2.75 ANGSTROMS) OF 130-712 IN COMPLEX WITH THIOCYANATE; CALCIUM AND HEME</scope>
    <scope>CALCIUM-BINDING SITES</scope>
    <scope>GLYCOSYLATION AT ASN-212; ASN-322; ASN-358 AND ASN-449</scope>
    <scope>DISULFIDE BONDS</scope>
</reference>
<reference evidence="16 19 21" key="6">
    <citation type="submission" date="2007-07" db="PDB data bank">
        <title>Crystal structure of the complex of buffalo Lactoperoxidase with fluoride ion at 3.5A resolution.</title>
        <authorList>
            <person name="Sheikh I.A."/>
            <person name="Jain R."/>
            <person name="Singh N."/>
            <person name="Sharma S."/>
            <person name="Bhushan A."/>
            <person name="Kaur P."/>
            <person name="Srinivasan A."/>
            <person name="Singh T.P."/>
        </authorList>
    </citation>
    <scope>X-RAY CRYSTALLOGRAPHY (3.50 ANGSTROMS) OF 118-712 IN COMPLEX WITH CALCIUM AND HEME</scope>
    <scope>CALCIUM-BINDING SITES</scope>
    <scope>PHOSPHORYLATION AT SER-315</scope>
    <scope>GLYCOSYLATION AT ASN-212; ASN-322; ASN-358 AND ASN-449</scope>
    <scope>DISULFIDE BONDS</scope>
</reference>
<reference evidence="16 22" key="7">
    <citation type="journal article" date="2009" name="J. Biol. Chem.">
        <title>Structural evidence of substrate specificity in mammalian peroxidases: structure of the thiocyanate complex with lactoperoxidase and its interactions at 2.4 A resolution.</title>
        <authorList>
            <person name="Sheikh I.A."/>
            <person name="Singh A.K."/>
            <person name="Singh N."/>
            <person name="Sinha M."/>
            <person name="Singh S.B."/>
            <person name="Bhushan A."/>
            <person name="Kaur P."/>
            <person name="Srinivasan A."/>
            <person name="Sharma S."/>
            <person name="Singh T.P."/>
        </authorList>
    </citation>
    <scope>X-RAY CRYSTALLOGRAPHY (2.4 ANGSTROMS) OF 118-712 IN COMPLEXES WITH THIOCYANATE; CYANIDE; CALCIUM AND HEME</scope>
    <scope>FUNCTION</scope>
    <scope>CATALYTIC ACTIVITY</scope>
    <scope>COFACTOR</scope>
    <scope>SUBCELLULAR LOCATION</scope>
    <scope>TISSUE SPECIFICITY</scope>
    <scope>CALCIUM-BINDING SITES</scope>
    <scope>PHOSPHORYLATION AT SER-315</scope>
    <scope>GLYCOSYLATION AT ASN-212; ASN-322; ASN-358 AND ASN-449</scope>
    <scope>DISULFIDE BONDS</scope>
</reference>
<name>PERL_BUBBU</name>
<comment type="function">
    <text evidence="1 4 5 6 9 17 18">Heme-containing oxidoreductase which catalyzes the conversion of thiocyanate (SCN(-)) into antimicrobial agent hypothiocyanous acid (OSCN(-)) in the presence of hydrogen peroxide (H2O2) (Probable). Also involved in the conversion of iodide (I(-)) into hypoiodite (IO(-)) in the presence of H2O2 (By similarity). Responsible for the inactivation of a wide range of micro-organisms and hence, important component of defense mechanism (PubMed:12071645). Shows antibacterial properties against E.coli, K.pneumoniae, P.aeruginosa, S.sonnei, S.saphrophyticus, S.epidermidis and S.dysenteriae (PubMed:12071645). May protect the udder from infection and may promote growth in newborns (By similarity). May be implicated in airway host defense against infection (By similarity). May contribute to maintaining an appropriate H2O2 cellular level, therefore protecting cells from H2O2-caused injuries and inflammation (By similarity).</text>
</comment>
<comment type="catalytic activity">
    <reaction evidence="9 18">
        <text>2 a phenolic donor + H2O2 = 2 a phenolic radical donor + 2 H2O</text>
        <dbReference type="Rhea" id="RHEA:56136"/>
        <dbReference type="ChEBI" id="CHEBI:15377"/>
        <dbReference type="ChEBI" id="CHEBI:16240"/>
        <dbReference type="ChEBI" id="CHEBI:139520"/>
        <dbReference type="ChEBI" id="CHEBI:139521"/>
        <dbReference type="EC" id="1.11.1.7"/>
    </reaction>
    <physiologicalReaction direction="left-to-right" evidence="17 18">
        <dbReference type="Rhea" id="RHEA:56137"/>
    </physiologicalReaction>
</comment>
<comment type="catalytic activity">
    <molecule>Lactoperoxidase</molecule>
    <reaction evidence="18">
        <text>thiocyanate + H2O2 + H(+) = hypothiocyanous acid + H2O</text>
        <dbReference type="Rhea" id="RHEA:69416"/>
        <dbReference type="ChEBI" id="CHEBI:15377"/>
        <dbReference type="ChEBI" id="CHEBI:15378"/>
        <dbReference type="ChEBI" id="CHEBI:16240"/>
        <dbReference type="ChEBI" id="CHEBI:18022"/>
        <dbReference type="ChEBI" id="CHEBI:133907"/>
    </reaction>
    <physiologicalReaction direction="left-to-right" evidence="18">
        <dbReference type="Rhea" id="RHEA:69417"/>
    </physiologicalReaction>
</comment>
<comment type="catalytic activity">
    <reaction evidence="5">
        <text>iodide + H2O2 = hypoiodite + H2O</text>
        <dbReference type="Rhea" id="RHEA:69420"/>
        <dbReference type="ChEBI" id="CHEBI:15377"/>
        <dbReference type="ChEBI" id="CHEBI:16240"/>
        <dbReference type="ChEBI" id="CHEBI:16382"/>
        <dbReference type="ChEBI" id="CHEBI:29232"/>
    </reaction>
    <physiologicalReaction direction="left-to-right" evidence="5">
        <dbReference type="Rhea" id="RHEA:69421"/>
    </physiologicalReaction>
</comment>
<comment type="cofactor">
    <cofactor evidence="8 10">
        <name>Ca(2+)</name>
        <dbReference type="ChEBI" id="CHEBI:29108"/>
    </cofactor>
    <text evidence="8 10">Binds 1 Ca(2+) ion per heterodimer.</text>
</comment>
<comment type="cofactor">
    <cofactor evidence="8 10">
        <name>heme b</name>
        <dbReference type="ChEBI" id="CHEBI:60344"/>
    </cofactor>
    <text evidence="8 10">Binds 1 heme b (iron(II)-protoporphyrin IX) group covalently per heterodimer.</text>
</comment>
<comment type="biophysicochemical properties">
    <kinetics>
        <KM evidence="9">0.82 mM for 2,2'-azino-bis(3-ethylbenzothiazoline-6-sulfonic acid) (at pH 6.0 and 60 degrees Celsius)</KM>
        <KM evidence="9">0.77 mM for 2,2'-azino-bis(3-ethylbenzothiazoline-6-sulfonic acid) (at pH 6.0 and 25 degrees Celsius)</KM>
    </kinetics>
    <phDependence>
        <text evidence="9">Optimum pH is 6.</text>
    </phDependence>
    <temperatureDependence>
        <text evidence="9">Optimum temperature is 60 degrees Celsius.</text>
    </temperatureDependence>
</comment>
<comment type="subcellular location">
    <subcellularLocation>
        <location evidence="9 10 11">Secreted</location>
    </subcellularLocation>
    <subcellularLocation>
        <location evidence="6">Cytoplasm</location>
    </subcellularLocation>
</comment>
<comment type="tissue specificity">
    <text evidence="9 10 11">Mammary gland; milk.</text>
</comment>
<comment type="miscellaneous">
    <text evidence="5">Thiocyanate (SCN(-)) and hypothiocyanite (OSCN(-)) are bound in the distal heme cavity. The iodide ion (I(-)) occupies a position which is stabilized by the interactions with heme moiety, His-226, Arg-372 and Glu-375. Hydrogen peroxide is held between the heme iron and His-226.</text>
</comment>
<comment type="similarity">
    <text evidence="8">Belongs to the peroxidase family. XPO subfamily.</text>
</comment>
<proteinExistence type="evidence at protein level"/>
<keyword id="KW-0002">3D-structure</keyword>
<keyword id="KW-0044">Antibiotic</keyword>
<keyword id="KW-0929">Antimicrobial</keyword>
<keyword id="KW-0106">Calcium</keyword>
<keyword id="KW-0963">Cytoplasm</keyword>
<keyword id="KW-1015">Disulfide bond</keyword>
<keyword id="KW-0325">Glycoprotein</keyword>
<keyword id="KW-0349">Heme</keyword>
<keyword id="KW-0376">Hydrogen peroxide</keyword>
<keyword id="KW-0408">Iron</keyword>
<keyword id="KW-0479">Metal-binding</keyword>
<keyword id="KW-0944">Nitration</keyword>
<keyword id="KW-0560">Oxidoreductase</keyword>
<keyword id="KW-0575">Peroxidase</keyword>
<keyword id="KW-0597">Phosphoprotein</keyword>
<keyword id="KW-0964">Secreted</keyword>
<keyword id="KW-0732">Signal</keyword>
<organism>
    <name type="scientific">Bubalus bubalis</name>
    <name type="common">Domestic water buffalo</name>
    <dbReference type="NCBI Taxonomy" id="89462"/>
    <lineage>
        <taxon>Eukaryota</taxon>
        <taxon>Metazoa</taxon>
        <taxon>Chordata</taxon>
        <taxon>Craniata</taxon>
        <taxon>Vertebrata</taxon>
        <taxon>Euteleostomi</taxon>
        <taxon>Mammalia</taxon>
        <taxon>Eutheria</taxon>
        <taxon>Laurasiatheria</taxon>
        <taxon>Artiodactyla</taxon>
        <taxon>Ruminantia</taxon>
        <taxon>Pecora</taxon>
        <taxon>Bovidae</taxon>
        <taxon>Bovinae</taxon>
        <taxon>Bubalus</taxon>
    </lineage>
</organism>
<sequence length="712" mass="80698">MWVCLQLPVFLASVTLFEVAASDTIAQAASTTTISDAVSKVKIQVNKAFLDSRTRLKTTLSSEAPTTQQLSEYFKHAKGQTRTAIRNGQVWEESFKRLRRDTTLTNVTDPSLDLTALSWEVGCGAPVPLVKCDENSPYRTITGDCNNRRSPALGAANRALARWLPAEYEDGLALPFGWTQRKTRNGFRVPLAREVSNKIVGYLDEEGVLDQNRSLLFMQWGQIVDHDLDFAPETELGSNEHSKTQCEEYCIQGDNCFPIMFPKNDPKLKTQGKCMPFFRAGFVCPTPPYQSLAREQINAVTSFLDASLVYGSEPSLASRLRNLSSPLGLMAVNQEAWDHGLAYLPFNNKKPSPCEFINTTARVPCFLAGDFRASEQILLATAHTLLLREHNRLARELKKLNPHWNGEKLYQEARKILGAFIQIITFRDYLPIVLGSEMQKWIPPYQGYNNSVDPRISNVFTFAFRFGHMEVPSTVSRLDENYQPWGPEAELPLHTLFFNTWRIIKDGGIDPLTRGLLAKKSKLMNQDKMVTSELRNKLFQPTHKIHGFDLAAINLQRCRDHGMPGYNSWRGFCGLSQPKTLKGLQTVLKNKILAKKLMDLYKTPDNIDIWIGGNAEPMVERGRVGPLLACLLGRQFQQIRDGDRFWWENPGVFTEKQRDSLQKFSFSRLICDNTHITKVPLHAFQANNYPHDFVDCSTVDKLDLSPWASREN</sequence>
<feature type="signal peptide" evidence="7">
    <location>
        <begin position="1"/>
        <end position="22"/>
    </location>
</feature>
<feature type="propeptide" id="PRO_0000424888" evidence="5">
    <location>
        <begin position="23"/>
        <end position="100"/>
    </location>
</feature>
<feature type="chain" id="PRO_0000424889" description="Lactoperoxidase" evidence="5">
    <location>
        <begin position="101"/>
        <end position="712"/>
    </location>
</feature>
<feature type="active site" description="Proton acceptor" evidence="2 8">
    <location>
        <position position="226"/>
    </location>
</feature>
<feature type="binding site" description="covalent" evidence="10 12 13">
    <location>
        <position position="225"/>
    </location>
    <ligand>
        <name>heme b</name>
        <dbReference type="ChEBI" id="CHEBI:60344"/>
    </ligand>
</feature>
<feature type="binding site" evidence="8 10 12 13">
    <location>
        <position position="227"/>
    </location>
    <ligand>
        <name>Ca(2+)</name>
        <dbReference type="ChEBI" id="CHEBI:29108"/>
    </ligand>
</feature>
<feature type="binding site" evidence="8 10 12 13">
    <location>
        <position position="301"/>
    </location>
    <ligand>
        <name>Ca(2+)</name>
        <dbReference type="ChEBI" id="CHEBI:29108"/>
    </ligand>
</feature>
<feature type="binding site" evidence="8 10 12 13">
    <location>
        <position position="303"/>
    </location>
    <ligand>
        <name>Ca(2+)</name>
        <dbReference type="ChEBI" id="CHEBI:29108"/>
    </ligand>
</feature>
<feature type="binding site" evidence="8 10 12 13">
    <location>
        <position position="305"/>
    </location>
    <ligand>
        <name>Ca(2+)</name>
        <dbReference type="ChEBI" id="CHEBI:29108"/>
    </ligand>
</feature>
<feature type="binding site" evidence="8 10 12 13">
    <location>
        <position position="307"/>
    </location>
    <ligand>
        <name>Ca(2+)</name>
        <dbReference type="ChEBI" id="CHEBI:29108"/>
    </ligand>
</feature>
<feature type="binding site" description="covalent" evidence="10 12 13">
    <location>
        <position position="375"/>
    </location>
    <ligand>
        <name>heme b</name>
        <dbReference type="ChEBI" id="CHEBI:60344"/>
    </ligand>
</feature>
<feature type="binding site" description="axial binding residue" evidence="10">
    <location>
        <position position="468"/>
    </location>
    <ligand>
        <name>heme b</name>
        <dbReference type="ChEBI" id="CHEBI:60344"/>
    </ligand>
    <ligandPart>
        <name>Fe</name>
        <dbReference type="ChEBI" id="CHEBI:18248"/>
    </ligandPart>
</feature>
<feature type="site" description="Transition state stabilizer" evidence="2 8">
    <location>
        <position position="372"/>
    </location>
</feature>
<feature type="modified residue" description="Phosphoserine" evidence="10 13">
    <location>
        <position position="315"/>
    </location>
</feature>
<feature type="modified residue" description="3'-nitrotyrosine" evidence="3">
    <location>
        <position position="482"/>
    </location>
</feature>
<feature type="glycosylation site" description="N-linked (GlcNAc...) (complex) asparagine; alternate" evidence="11">
    <location>
        <position position="106"/>
    </location>
</feature>
<feature type="glycosylation site" description="N-linked (GlcNAc...) (hybrid) asparagine; alternate" evidence="11">
    <location>
        <position position="106"/>
    </location>
</feature>
<feature type="glycosylation site" description="N-linked (GlcNAc...) (complex) asparagine; alternate" evidence="10 11 12 13">
    <location>
        <position position="212"/>
    </location>
</feature>
<feature type="glycosylation site" description="N-linked (GlcNAc...) (high mannose) asparagine; alternate" evidence="10 11 12 13">
    <location>
        <position position="212"/>
    </location>
</feature>
<feature type="glycosylation site" description="N-linked (GlcNAc...) (high mannose) asparagine" evidence="10 11 12 13">
    <location>
        <position position="322"/>
    </location>
</feature>
<feature type="glycosylation site" description="N-linked (GlcNAc...) asparagine" evidence="10 12 13">
    <location>
        <position position="358"/>
    </location>
</feature>
<feature type="glycosylation site" description="N-linked (GlcNAc...) (complex) asparagine; alternate" evidence="10 11 12 13">
    <location>
        <position position="449"/>
    </location>
</feature>
<feature type="glycosylation site" description="N-linked (GlcNAc...) (high mannose) asparagine; alternate" evidence="10 11 12 13">
    <location>
        <position position="449"/>
    </location>
</feature>
<feature type="glycosylation site" description="N-linked (GlcNAc...) (hybrid) asparagine; alternate" evidence="10 11 12 13">
    <location>
        <position position="449"/>
    </location>
</feature>
<feature type="disulfide bond" evidence="8 10 12 13">
    <location>
        <begin position="123"/>
        <end position="284"/>
    </location>
</feature>
<feature type="disulfide bond" evidence="8 10 12 13">
    <location>
        <begin position="132"/>
        <end position="145"/>
    </location>
</feature>
<feature type="disulfide bond" evidence="8 10 12 13">
    <location>
        <begin position="246"/>
        <end position="256"/>
    </location>
</feature>
<feature type="disulfide bond" evidence="8 10 12 13">
    <location>
        <begin position="250"/>
        <end position="274"/>
    </location>
</feature>
<feature type="disulfide bond" evidence="8 10 12 13">
    <location>
        <begin position="354"/>
        <end position="365"/>
    </location>
</feature>
<feature type="disulfide bond" evidence="8 10 12 13">
    <location>
        <begin position="573"/>
        <end position="630"/>
    </location>
</feature>
<feature type="disulfide bond" evidence="8 10 12 13">
    <location>
        <begin position="671"/>
        <end position="696"/>
    </location>
</feature>
<feature type="sequence conflict" description="In Ref. 2; ADZ95997." evidence="16" ref="2">
    <original>E</original>
    <variation>D</variation>
    <location>
        <position position="206"/>
    </location>
</feature>
<feature type="sequence conflict" description="In Ref. 2; ADZ95997." evidence="16" ref="2">
    <original>G</original>
    <variation>R</variation>
    <location>
        <position position="340"/>
    </location>
</feature>
<feature type="sequence conflict" description="In Ref. 2; ADZ95997." evidence="16" ref="2">
    <original>R</original>
    <variation>H</variation>
    <location>
        <position position="362"/>
    </location>
</feature>
<feature type="sequence conflict" description="In Ref. 2; ADZ95997." evidence="16" ref="2">
    <original>H</original>
    <variation>Q</variation>
    <location>
        <position position="403"/>
    </location>
</feature>
<feature type="sequence conflict" description="In Ref. 2; ADZ95997." evidence="16" ref="2">
    <original>N</original>
    <variation>D</variation>
    <location>
        <position position="405"/>
    </location>
</feature>
<feature type="sequence conflict" description="In Ref. 2; ADZ95997." evidence="16" ref="2">
    <original>I</original>
    <variation>V</variation>
    <location>
        <position position="421"/>
    </location>
</feature>
<feature type="sequence conflict" description="In Ref. 2; ADZ95997." evidence="16" ref="2">
    <original>T</original>
    <variation>V</variation>
    <location>
        <position position="513"/>
    </location>
</feature>
<feature type="sequence conflict" description="In Ref. 2; ADZ95997." evidence="16" ref="2">
    <original>F</original>
    <variation>M</variation>
    <location>
        <position position="664"/>
    </location>
</feature>
<feature type="sequence conflict" description="In Ref. 2; ADZ95997." evidence="16" ref="2">
    <original>T</original>
    <variation>A</variation>
    <location>
        <position position="698"/>
    </location>
</feature>
<feature type="strand" evidence="25">
    <location>
        <begin position="141"/>
        <end position="143"/>
    </location>
</feature>
<feature type="strand" evidence="27">
    <location>
        <begin position="146"/>
        <end position="150"/>
    </location>
</feature>
<feature type="turn" evidence="27">
    <location>
        <begin position="151"/>
        <end position="154"/>
    </location>
</feature>
<feature type="strand" evidence="24">
    <location>
        <begin position="156"/>
        <end position="159"/>
    </location>
</feature>
<feature type="strand" evidence="27">
    <location>
        <begin position="171"/>
        <end position="173"/>
    </location>
</feature>
<feature type="helix" evidence="27">
    <location>
        <begin position="192"/>
        <end position="199"/>
    </location>
</feature>
<feature type="strand" evidence="24">
    <location>
        <begin position="209"/>
        <end position="214"/>
    </location>
</feature>
<feature type="helix" evidence="27">
    <location>
        <begin position="215"/>
        <end position="228"/>
    </location>
</feature>
<feature type="strand" evidence="27">
    <location>
        <begin position="238"/>
        <end position="240"/>
    </location>
</feature>
<feature type="turn" evidence="27">
    <location>
        <begin position="241"/>
        <end position="243"/>
    </location>
</feature>
<feature type="helix" evidence="27">
    <location>
        <begin position="244"/>
        <end position="249"/>
    </location>
</feature>
<feature type="helix" evidence="27">
    <location>
        <begin position="266"/>
        <end position="271"/>
    </location>
</feature>
<feature type="strand" evidence="27">
    <location>
        <begin position="273"/>
        <end position="275"/>
    </location>
</feature>
<feature type="strand" evidence="27">
    <location>
        <begin position="282"/>
        <end position="284"/>
    </location>
</feature>
<feature type="strand" evidence="25">
    <location>
        <begin position="286"/>
        <end position="288"/>
    </location>
</feature>
<feature type="strand" evidence="27">
    <location>
        <begin position="296"/>
        <end position="298"/>
    </location>
</feature>
<feature type="strand" evidence="24">
    <location>
        <begin position="302"/>
        <end position="305"/>
    </location>
</feature>
<feature type="helix" evidence="27">
    <location>
        <begin position="307"/>
        <end position="310"/>
    </location>
</feature>
<feature type="helix" evidence="27">
    <location>
        <begin position="314"/>
        <end position="319"/>
    </location>
</feature>
<feature type="helix" evidence="27">
    <location>
        <begin position="353"/>
        <end position="357"/>
    </location>
</feature>
<feature type="turn" evidence="27">
    <location>
        <begin position="358"/>
        <end position="361"/>
    </location>
</feature>
<feature type="turn" evidence="27">
    <location>
        <begin position="371"/>
        <end position="374"/>
    </location>
</feature>
<feature type="helix" evidence="27">
    <location>
        <begin position="377"/>
        <end position="400"/>
    </location>
</feature>
<feature type="helix" evidence="27">
    <location>
        <begin position="406"/>
        <end position="427"/>
    </location>
</feature>
<feature type="helix" evidence="27">
    <location>
        <begin position="429"/>
        <end position="434"/>
    </location>
</feature>
<feature type="helix" evidence="24">
    <location>
        <begin position="435"/>
        <end position="437"/>
    </location>
</feature>
<feature type="helix" evidence="27">
    <location>
        <begin position="438"/>
        <end position="441"/>
    </location>
</feature>
<feature type="helix" evidence="27">
    <location>
        <begin position="460"/>
        <end position="463"/>
    </location>
</feature>
<feature type="helix" evidence="27">
    <location>
        <begin position="464"/>
        <end position="470"/>
    </location>
</feature>
<feature type="strand" evidence="27">
    <location>
        <begin position="473"/>
        <end position="476"/>
    </location>
</feature>
<feature type="strand" evidence="27">
    <location>
        <begin position="482"/>
        <end position="484"/>
    </location>
</feature>
<feature type="strand" evidence="23">
    <location>
        <begin position="486"/>
        <end position="488"/>
    </location>
</feature>
<feature type="strand" evidence="27">
    <location>
        <begin position="490"/>
        <end position="492"/>
    </location>
</feature>
<feature type="helix" evidence="27">
    <location>
        <begin position="493"/>
        <end position="496"/>
    </location>
</feature>
<feature type="helix" evidence="27">
    <location>
        <begin position="501"/>
        <end position="504"/>
    </location>
</feature>
<feature type="turn" evidence="24">
    <location>
        <begin position="505"/>
        <end position="507"/>
    </location>
</feature>
<feature type="helix" evidence="27">
    <location>
        <begin position="510"/>
        <end position="518"/>
    </location>
</feature>
<feature type="strand" evidence="24">
    <location>
        <begin position="519"/>
        <end position="522"/>
    </location>
</feature>
<feature type="helix" evidence="27">
    <location>
        <begin position="532"/>
        <end position="535"/>
    </location>
</feature>
<feature type="strand" evidence="26">
    <location>
        <begin position="541"/>
        <end position="543"/>
    </location>
</feature>
<feature type="strand" evidence="27">
    <location>
        <begin position="545"/>
        <end position="548"/>
    </location>
</feature>
<feature type="helix" evidence="27">
    <location>
        <begin position="550"/>
        <end position="560"/>
    </location>
</feature>
<feature type="helix" evidence="27">
    <location>
        <begin position="566"/>
        <end position="572"/>
    </location>
</feature>
<feature type="helix" evidence="27">
    <location>
        <begin position="581"/>
        <end position="587"/>
    </location>
</feature>
<feature type="helix" evidence="27">
    <location>
        <begin position="591"/>
        <end position="601"/>
    </location>
</feature>
<feature type="helix" evidence="27">
    <location>
        <begin position="604"/>
        <end position="606"/>
    </location>
</feature>
<feature type="helix" evidence="27">
    <location>
        <begin position="609"/>
        <end position="615"/>
    </location>
</feature>
<feature type="strand" evidence="27">
    <location>
        <begin position="620"/>
        <end position="624"/>
    </location>
</feature>
<feature type="helix" evidence="27">
    <location>
        <begin position="626"/>
        <end position="641"/>
    </location>
</feature>
<feature type="helix" evidence="27">
    <location>
        <begin position="655"/>
        <end position="661"/>
    </location>
</feature>
<feature type="helix" evidence="27">
    <location>
        <begin position="666"/>
        <end position="673"/>
    </location>
</feature>
<feature type="strand" evidence="26">
    <location>
        <begin position="678"/>
        <end position="685"/>
    </location>
</feature>
<feature type="turn" evidence="27">
    <location>
        <begin position="689"/>
        <end position="692"/>
    </location>
</feature>
<feature type="strand" evidence="26">
    <location>
        <begin position="693"/>
        <end position="695"/>
    </location>
</feature>
<feature type="helix" evidence="27">
    <location>
        <begin position="696"/>
        <end position="698"/>
    </location>
</feature>
<feature type="helix" evidence="27">
    <location>
        <begin position="705"/>
        <end position="707"/>
    </location>
</feature>
<dbReference type="EC" id="1.11.1.7" evidence="9 10"/>
<dbReference type="EMBL" id="EF580919">
    <property type="protein sequence ID" value="ABQ45486.1"/>
    <property type="molecule type" value="mRNA"/>
</dbReference>
<dbReference type="EMBL" id="HQ285238">
    <property type="protein sequence ID" value="ADZ95997.1"/>
    <property type="molecule type" value="mRNA"/>
</dbReference>
<dbReference type="RefSeq" id="NP_001277812.1">
    <property type="nucleotide sequence ID" value="NM_001290883.1"/>
</dbReference>
<dbReference type="PDB" id="2GJM">
    <property type="method" value="X-ray"/>
    <property type="resolution" value="2.75 A"/>
    <property type="chains" value="A=130-712"/>
</dbReference>
<dbReference type="PDB" id="2O86">
    <property type="method" value="X-ray"/>
    <property type="resolution" value="2.80 A"/>
    <property type="chains" value="A=118-712"/>
</dbReference>
<dbReference type="PDB" id="2Z5Z">
    <property type="method" value="X-ray"/>
    <property type="resolution" value="3.50 A"/>
    <property type="chains" value="A=118-712"/>
</dbReference>
<dbReference type="PDB" id="3ERH">
    <property type="method" value="X-ray"/>
    <property type="resolution" value="2.40 A"/>
    <property type="chains" value="A=118-712"/>
</dbReference>
<dbReference type="PDB" id="3FAQ">
    <property type="method" value="X-ray"/>
    <property type="resolution" value="2.70 A"/>
    <property type="chains" value="A=118-712"/>
</dbReference>
<dbReference type="PDB" id="3FNL">
    <property type="method" value="X-ray"/>
    <property type="resolution" value="2.48 A"/>
    <property type="chains" value="A=118-712"/>
</dbReference>
<dbReference type="PDB" id="4Y55">
    <property type="method" value="X-ray"/>
    <property type="resolution" value="2.10 A"/>
    <property type="chains" value="A=118-712"/>
</dbReference>
<dbReference type="PDBsum" id="2GJM"/>
<dbReference type="PDBsum" id="2O86"/>
<dbReference type="PDBsum" id="2Z5Z"/>
<dbReference type="PDBsum" id="3ERH"/>
<dbReference type="PDBsum" id="3FAQ"/>
<dbReference type="PDBsum" id="3FNL"/>
<dbReference type="PDBsum" id="4Y55"/>
<dbReference type="SMR" id="A5JUY8"/>
<dbReference type="GlyCosmos" id="A5JUY8">
    <property type="glycosylation" value="5 sites, No reported glycans"/>
</dbReference>
<dbReference type="iPTMnet" id="A5JUY8"/>
<dbReference type="GeneID" id="102405711"/>
<dbReference type="KEGG" id="bbub:102405711"/>
<dbReference type="CTD" id="4025"/>
<dbReference type="OrthoDB" id="823504at2759"/>
<dbReference type="EvolutionaryTrace" id="A5JUY8"/>
<dbReference type="GO" id="GO:0005737">
    <property type="term" value="C:cytoplasm"/>
    <property type="evidence" value="ECO:0007669"/>
    <property type="project" value="UniProtKB-SubCell"/>
</dbReference>
<dbReference type="GO" id="GO:0005615">
    <property type="term" value="C:extracellular space"/>
    <property type="evidence" value="ECO:0000314"/>
    <property type="project" value="UniProtKB"/>
</dbReference>
<dbReference type="GO" id="GO:0005509">
    <property type="term" value="F:calcium ion binding"/>
    <property type="evidence" value="ECO:0000314"/>
    <property type="project" value="UniProtKB"/>
</dbReference>
<dbReference type="GO" id="GO:0020037">
    <property type="term" value="F:heme binding"/>
    <property type="evidence" value="ECO:0007669"/>
    <property type="project" value="InterPro"/>
</dbReference>
<dbReference type="GO" id="GO:0140825">
    <property type="term" value="F:lactoperoxidase activity"/>
    <property type="evidence" value="ECO:0007669"/>
    <property type="project" value="UniProtKB-EC"/>
</dbReference>
<dbReference type="GO" id="GO:0004601">
    <property type="term" value="F:peroxidase activity"/>
    <property type="evidence" value="ECO:0000314"/>
    <property type="project" value="UniProtKB"/>
</dbReference>
<dbReference type="GO" id="GO:0036393">
    <property type="term" value="F:thiocyanate peroxidase activity"/>
    <property type="evidence" value="ECO:0000314"/>
    <property type="project" value="UniProtKB"/>
</dbReference>
<dbReference type="GO" id="GO:0019731">
    <property type="term" value="P:antibacterial humoral response"/>
    <property type="evidence" value="ECO:0000314"/>
    <property type="project" value="UniProtKB"/>
</dbReference>
<dbReference type="GO" id="GO:0042744">
    <property type="term" value="P:hydrogen peroxide catabolic process"/>
    <property type="evidence" value="ECO:0000314"/>
    <property type="project" value="UniProtKB"/>
</dbReference>
<dbReference type="GO" id="GO:0006979">
    <property type="term" value="P:response to oxidative stress"/>
    <property type="evidence" value="ECO:0007669"/>
    <property type="project" value="InterPro"/>
</dbReference>
<dbReference type="CDD" id="cd09824">
    <property type="entry name" value="myeloperoxidase_like"/>
    <property type="match status" value="1"/>
</dbReference>
<dbReference type="FunFam" id="1.10.640.10:FF:000001">
    <property type="entry name" value="Peroxidasin homolog"/>
    <property type="match status" value="1"/>
</dbReference>
<dbReference type="Gene3D" id="1.10.640.10">
    <property type="entry name" value="Haem peroxidase domain superfamily, animal type"/>
    <property type="match status" value="1"/>
</dbReference>
<dbReference type="InterPro" id="IPR019791">
    <property type="entry name" value="Haem_peroxidase_animal"/>
</dbReference>
<dbReference type="InterPro" id="IPR010255">
    <property type="entry name" value="Haem_peroxidase_sf"/>
</dbReference>
<dbReference type="InterPro" id="IPR037120">
    <property type="entry name" value="Haem_peroxidase_sf_animal"/>
</dbReference>
<dbReference type="PANTHER" id="PTHR11475:SF67">
    <property type="entry name" value="LACTOPEROXIDASE"/>
    <property type="match status" value="1"/>
</dbReference>
<dbReference type="PANTHER" id="PTHR11475">
    <property type="entry name" value="OXIDASE/PEROXIDASE"/>
    <property type="match status" value="1"/>
</dbReference>
<dbReference type="Pfam" id="PF03098">
    <property type="entry name" value="An_peroxidase"/>
    <property type="match status" value="1"/>
</dbReference>
<dbReference type="PRINTS" id="PR00457">
    <property type="entry name" value="ANPEROXIDASE"/>
</dbReference>
<dbReference type="SUPFAM" id="SSF48113">
    <property type="entry name" value="Heme-dependent peroxidases"/>
    <property type="match status" value="1"/>
</dbReference>
<dbReference type="PROSITE" id="PS50292">
    <property type="entry name" value="PEROXIDASE_3"/>
    <property type="match status" value="1"/>
</dbReference>
<protein>
    <recommendedName>
        <fullName evidence="15">Lactoperoxidase</fullName>
        <shortName evidence="14 15">LPO</shortName>
        <shortName evidence="14">WBLP</shortName>
        <ecNumber evidence="9 10">1.11.1.7</ecNumber>
    </recommendedName>
</protein>